<feature type="chain" id="PRO_1000185301" description="Ribosomal RNA large subunit methyltransferase E">
    <location>
        <begin position="1"/>
        <end position="208"/>
    </location>
</feature>
<feature type="active site" description="Proton acceptor" evidence="1">
    <location>
        <position position="164"/>
    </location>
</feature>
<feature type="binding site" evidence="1">
    <location>
        <position position="63"/>
    </location>
    <ligand>
        <name>S-adenosyl-L-methionine</name>
        <dbReference type="ChEBI" id="CHEBI:59789"/>
    </ligand>
</feature>
<feature type="binding site" evidence="1">
    <location>
        <position position="65"/>
    </location>
    <ligand>
        <name>S-adenosyl-L-methionine</name>
        <dbReference type="ChEBI" id="CHEBI:59789"/>
    </ligand>
</feature>
<feature type="binding site" evidence="1">
    <location>
        <position position="83"/>
    </location>
    <ligand>
        <name>S-adenosyl-L-methionine</name>
        <dbReference type="ChEBI" id="CHEBI:59789"/>
    </ligand>
</feature>
<feature type="binding site" evidence="1">
    <location>
        <position position="99"/>
    </location>
    <ligand>
        <name>S-adenosyl-L-methionine</name>
        <dbReference type="ChEBI" id="CHEBI:59789"/>
    </ligand>
</feature>
<feature type="binding site" evidence="1">
    <location>
        <position position="124"/>
    </location>
    <ligand>
        <name>S-adenosyl-L-methionine</name>
        <dbReference type="ChEBI" id="CHEBI:59789"/>
    </ligand>
</feature>
<reference key="1">
    <citation type="journal article" date="2009" name="PLoS ONE">
        <title>Salmonella paratyphi C: genetic divergence from Salmonella choleraesuis and pathogenic convergence with Salmonella typhi.</title>
        <authorList>
            <person name="Liu W.-Q."/>
            <person name="Feng Y."/>
            <person name="Wang Y."/>
            <person name="Zou Q.-H."/>
            <person name="Chen F."/>
            <person name="Guo J.-T."/>
            <person name="Peng Y.-H."/>
            <person name="Jin Y."/>
            <person name="Li Y.-G."/>
            <person name="Hu S.-N."/>
            <person name="Johnston R.N."/>
            <person name="Liu G.-R."/>
            <person name="Liu S.-L."/>
        </authorList>
    </citation>
    <scope>NUCLEOTIDE SEQUENCE [LARGE SCALE GENOMIC DNA]</scope>
    <source>
        <strain>RKS4594</strain>
    </source>
</reference>
<evidence type="ECO:0000255" key="1">
    <source>
        <dbReference type="HAMAP-Rule" id="MF_01547"/>
    </source>
</evidence>
<gene>
    <name evidence="1" type="primary">rlmE</name>
    <name evidence="1" type="synonym">ftsJ</name>
    <name evidence="1" type="synonym">rrmJ</name>
    <name type="ordered locus">SPC_3365</name>
</gene>
<organism>
    <name type="scientific">Salmonella paratyphi C (strain RKS4594)</name>
    <dbReference type="NCBI Taxonomy" id="476213"/>
    <lineage>
        <taxon>Bacteria</taxon>
        <taxon>Pseudomonadati</taxon>
        <taxon>Pseudomonadota</taxon>
        <taxon>Gammaproteobacteria</taxon>
        <taxon>Enterobacterales</taxon>
        <taxon>Enterobacteriaceae</taxon>
        <taxon>Salmonella</taxon>
    </lineage>
</organism>
<name>RLME_SALPC</name>
<dbReference type="EC" id="2.1.1.166" evidence="1"/>
<dbReference type="EMBL" id="CP000857">
    <property type="protein sequence ID" value="ACN47450.1"/>
    <property type="molecule type" value="Genomic_DNA"/>
</dbReference>
<dbReference type="RefSeq" id="WP_000145964.1">
    <property type="nucleotide sequence ID" value="NC_012125.1"/>
</dbReference>
<dbReference type="SMR" id="C0PZ62"/>
<dbReference type="KEGG" id="sei:SPC_3365"/>
<dbReference type="HOGENOM" id="CLU_009422_4_0_6"/>
<dbReference type="Proteomes" id="UP000001599">
    <property type="component" value="Chromosome"/>
</dbReference>
<dbReference type="GO" id="GO:0005737">
    <property type="term" value="C:cytoplasm"/>
    <property type="evidence" value="ECO:0007669"/>
    <property type="project" value="UniProtKB-SubCell"/>
</dbReference>
<dbReference type="GO" id="GO:0008650">
    <property type="term" value="F:rRNA (uridine-2'-O-)-methyltransferase activity"/>
    <property type="evidence" value="ECO:0007669"/>
    <property type="project" value="UniProtKB-UniRule"/>
</dbReference>
<dbReference type="CDD" id="cd02440">
    <property type="entry name" value="AdoMet_MTases"/>
    <property type="match status" value="1"/>
</dbReference>
<dbReference type="FunFam" id="3.40.50.150:FF:000005">
    <property type="entry name" value="Ribosomal RNA large subunit methyltransferase E"/>
    <property type="match status" value="1"/>
</dbReference>
<dbReference type="Gene3D" id="3.40.50.150">
    <property type="entry name" value="Vaccinia Virus protein VP39"/>
    <property type="match status" value="1"/>
</dbReference>
<dbReference type="HAMAP" id="MF_01547">
    <property type="entry name" value="RNA_methyltr_E"/>
    <property type="match status" value="1"/>
</dbReference>
<dbReference type="InterPro" id="IPR050082">
    <property type="entry name" value="RNA_methyltr_RlmE"/>
</dbReference>
<dbReference type="InterPro" id="IPR002877">
    <property type="entry name" value="RNA_MeTrfase_FtsJ_dom"/>
</dbReference>
<dbReference type="InterPro" id="IPR015507">
    <property type="entry name" value="rRNA-MeTfrase_E"/>
</dbReference>
<dbReference type="InterPro" id="IPR004512">
    <property type="entry name" value="rRNA_MeTrfase_gammaproteobac"/>
</dbReference>
<dbReference type="InterPro" id="IPR029063">
    <property type="entry name" value="SAM-dependent_MTases_sf"/>
</dbReference>
<dbReference type="NCBIfam" id="NF008390">
    <property type="entry name" value="PRK11188.1"/>
    <property type="match status" value="1"/>
</dbReference>
<dbReference type="NCBIfam" id="TIGR00438">
    <property type="entry name" value="rrmJ"/>
    <property type="match status" value="1"/>
</dbReference>
<dbReference type="PANTHER" id="PTHR10920">
    <property type="entry name" value="RIBOSOMAL RNA METHYLTRANSFERASE"/>
    <property type="match status" value="1"/>
</dbReference>
<dbReference type="PANTHER" id="PTHR10920:SF18">
    <property type="entry name" value="RRNA METHYLTRANSFERASE 2, MITOCHONDRIAL"/>
    <property type="match status" value="1"/>
</dbReference>
<dbReference type="Pfam" id="PF01728">
    <property type="entry name" value="FtsJ"/>
    <property type="match status" value="1"/>
</dbReference>
<dbReference type="PIRSF" id="PIRSF005461">
    <property type="entry name" value="23S_rRNA_mtase"/>
    <property type="match status" value="1"/>
</dbReference>
<dbReference type="SUPFAM" id="SSF53335">
    <property type="entry name" value="S-adenosyl-L-methionine-dependent methyltransferases"/>
    <property type="match status" value="1"/>
</dbReference>
<sequence>MTGKKRSASSSRWLHEHFSDKYVQQAQKKGLRSRAWFKLDEIQQSDKLFKPGMTVVDLGAAPGGWSQYVVTQIGGKGRIIACDLLPMDPIVGVDFLQGDFRDELVMKALLERVGDSKVQVVMSDMAPNMSGTPAVDIPRAMYLVELALEMCRDVLAPGGSFVVKVFQGEGFDEYLREIRSLFTKVKVRKPDSSRARSREVYIVATGRK</sequence>
<protein>
    <recommendedName>
        <fullName evidence="1">Ribosomal RNA large subunit methyltransferase E</fullName>
        <ecNumber evidence="1">2.1.1.166</ecNumber>
    </recommendedName>
    <alternativeName>
        <fullName evidence="1">23S rRNA Um2552 methyltransferase</fullName>
    </alternativeName>
    <alternativeName>
        <fullName evidence="1">rRNA (uridine-2'-O-)-methyltransferase</fullName>
    </alternativeName>
</protein>
<accession>C0PZ62</accession>
<comment type="function">
    <text evidence="1">Specifically methylates the uridine in position 2552 of 23S rRNA at the 2'-O position of the ribose in the fully assembled 50S ribosomal subunit.</text>
</comment>
<comment type="catalytic activity">
    <reaction evidence="1">
        <text>uridine(2552) in 23S rRNA + S-adenosyl-L-methionine = 2'-O-methyluridine(2552) in 23S rRNA + S-adenosyl-L-homocysteine + H(+)</text>
        <dbReference type="Rhea" id="RHEA:42720"/>
        <dbReference type="Rhea" id="RHEA-COMP:10202"/>
        <dbReference type="Rhea" id="RHEA-COMP:10203"/>
        <dbReference type="ChEBI" id="CHEBI:15378"/>
        <dbReference type="ChEBI" id="CHEBI:57856"/>
        <dbReference type="ChEBI" id="CHEBI:59789"/>
        <dbReference type="ChEBI" id="CHEBI:65315"/>
        <dbReference type="ChEBI" id="CHEBI:74478"/>
        <dbReference type="EC" id="2.1.1.166"/>
    </reaction>
</comment>
<comment type="subcellular location">
    <subcellularLocation>
        <location evidence="1">Cytoplasm</location>
    </subcellularLocation>
</comment>
<comment type="similarity">
    <text evidence="1">Belongs to the class I-like SAM-binding methyltransferase superfamily. RNA methyltransferase RlmE family.</text>
</comment>
<keyword id="KW-0963">Cytoplasm</keyword>
<keyword id="KW-0489">Methyltransferase</keyword>
<keyword id="KW-0698">rRNA processing</keyword>
<keyword id="KW-0949">S-adenosyl-L-methionine</keyword>
<keyword id="KW-0808">Transferase</keyword>
<proteinExistence type="inferred from homology"/>